<name>SYP_AROAE</name>
<reference key="1">
    <citation type="journal article" date="2005" name="Arch. Microbiol.">
        <title>The genome sequence of an anaerobic aromatic-degrading denitrifying bacterium, strain EbN1.</title>
        <authorList>
            <person name="Rabus R."/>
            <person name="Kube M."/>
            <person name="Heider J."/>
            <person name="Beck A."/>
            <person name="Heitmann K."/>
            <person name="Widdel F."/>
            <person name="Reinhardt R."/>
        </authorList>
    </citation>
    <scope>NUCLEOTIDE SEQUENCE [LARGE SCALE GENOMIC DNA]</scope>
    <source>
        <strain>DSM 19018 / LMG 30748 / EbN1</strain>
    </source>
</reference>
<feature type="chain" id="PRO_0000248641" description="Proline--tRNA ligase">
    <location>
        <begin position="1"/>
        <end position="583"/>
    </location>
</feature>
<accession>Q5P7T1</accession>
<gene>
    <name evidence="1" type="primary">proS</name>
    <name type="ordered locus">AZOSEA05080</name>
    <name type="ORF">ebA950</name>
</gene>
<evidence type="ECO:0000255" key="1">
    <source>
        <dbReference type="HAMAP-Rule" id="MF_01569"/>
    </source>
</evidence>
<keyword id="KW-0030">Aminoacyl-tRNA synthetase</keyword>
<keyword id="KW-0067">ATP-binding</keyword>
<keyword id="KW-0963">Cytoplasm</keyword>
<keyword id="KW-0436">Ligase</keyword>
<keyword id="KW-0547">Nucleotide-binding</keyword>
<keyword id="KW-0648">Protein biosynthesis</keyword>
<keyword id="KW-1185">Reference proteome</keyword>
<proteinExistence type="inferred from homology"/>
<organism>
    <name type="scientific">Aromatoleum aromaticum (strain DSM 19018 / LMG 30748 / EbN1)</name>
    <name type="common">Azoarcus sp. (strain EbN1)</name>
    <dbReference type="NCBI Taxonomy" id="76114"/>
    <lineage>
        <taxon>Bacteria</taxon>
        <taxon>Pseudomonadati</taxon>
        <taxon>Pseudomonadota</taxon>
        <taxon>Betaproteobacteria</taxon>
        <taxon>Rhodocyclales</taxon>
        <taxon>Rhodocyclaceae</taxon>
        <taxon>Aromatoleum</taxon>
    </lineage>
</organism>
<comment type="function">
    <text evidence="1">Catalyzes the attachment of proline to tRNA(Pro) in a two-step reaction: proline is first activated by ATP to form Pro-AMP and then transferred to the acceptor end of tRNA(Pro). As ProRS can inadvertently accommodate and process non-cognate amino acids such as alanine and cysteine, to avoid such errors it has two additional distinct editing activities against alanine. One activity is designated as 'pretransfer' editing and involves the tRNA(Pro)-independent hydrolysis of activated Ala-AMP. The other activity is designated 'posttransfer' editing and involves deacylation of mischarged Ala-tRNA(Pro). The misacylated Cys-tRNA(Pro) is not edited by ProRS.</text>
</comment>
<comment type="catalytic activity">
    <reaction evidence="1">
        <text>tRNA(Pro) + L-proline + ATP = L-prolyl-tRNA(Pro) + AMP + diphosphate</text>
        <dbReference type="Rhea" id="RHEA:14305"/>
        <dbReference type="Rhea" id="RHEA-COMP:9700"/>
        <dbReference type="Rhea" id="RHEA-COMP:9702"/>
        <dbReference type="ChEBI" id="CHEBI:30616"/>
        <dbReference type="ChEBI" id="CHEBI:33019"/>
        <dbReference type="ChEBI" id="CHEBI:60039"/>
        <dbReference type="ChEBI" id="CHEBI:78442"/>
        <dbReference type="ChEBI" id="CHEBI:78532"/>
        <dbReference type="ChEBI" id="CHEBI:456215"/>
        <dbReference type="EC" id="6.1.1.15"/>
    </reaction>
</comment>
<comment type="subunit">
    <text evidence="1">Homodimer.</text>
</comment>
<comment type="subcellular location">
    <subcellularLocation>
        <location evidence="1">Cytoplasm</location>
    </subcellularLocation>
</comment>
<comment type="domain">
    <text evidence="1">Consists of three domains: the N-terminal catalytic domain, the editing domain and the C-terminal anticodon-binding domain.</text>
</comment>
<comment type="similarity">
    <text evidence="1">Belongs to the class-II aminoacyl-tRNA synthetase family. ProS type 1 subfamily.</text>
</comment>
<sequence length="583" mass="64296">MRASQYFISTLKEAPSDAEVVSQKLMLRAGFIRKVAAGIYSYLPIGLRVIRKVEDIVRDEMNRAGALELTMPLVQPAELWDETGRWEQMGAEMLRFKDRHQRDFALQPTSEEVVTDIARQELKSYRQLPKNFYQIQTKFRDERRPRFGVMRGREFTMKDAYSFDRDVAAAGRSYDAMYAAYCRIFDRLGLTYRAVAADTGAIGGDRSHEFQVIADTGEDAIVYCPGSDYAANIELAEALPLLATRAAPAQALEKTPTPGRTTCEEVAKLLGVPLETTVKSLVLATDDVDDTNKPAGVTVWLLLVRGDHELNEVKAGKIPGLKAGFRFATETEIAERFGCQPGYLGPVGVNKAVKIVADRTVANMADFICGANEADFHLTGTNWGRDLPEPDLVADLRNIIEGDPSPDGRGRLAIQRGIEVGHVFYLGTKYSQSMNATFLDENGKPKHFEMGCYGIGVTRILGAAIEQNHDARGIIWPDAIAPFRVVVCPVGWGKSDAVRTEATKLYETLCAGGIDVILDDRDERPGVMFADWELIGVPHRVVIGDRGLKDGMAEYQGRRDAEAAKIPLAELAAFVGSKLRPTA</sequence>
<dbReference type="EC" id="6.1.1.15" evidence="1"/>
<dbReference type="EMBL" id="CR555306">
    <property type="protein sequence ID" value="CAI06630.1"/>
    <property type="molecule type" value="Genomic_DNA"/>
</dbReference>
<dbReference type="RefSeq" id="WP_011236360.1">
    <property type="nucleotide sequence ID" value="NC_006513.1"/>
</dbReference>
<dbReference type="SMR" id="Q5P7T1"/>
<dbReference type="STRING" id="76114.ebA950"/>
<dbReference type="KEGG" id="eba:ebA950"/>
<dbReference type="eggNOG" id="COG0442">
    <property type="taxonomic scope" value="Bacteria"/>
</dbReference>
<dbReference type="HOGENOM" id="CLU_016739_0_0_4"/>
<dbReference type="OrthoDB" id="9809052at2"/>
<dbReference type="Proteomes" id="UP000006552">
    <property type="component" value="Chromosome"/>
</dbReference>
<dbReference type="GO" id="GO:0005829">
    <property type="term" value="C:cytosol"/>
    <property type="evidence" value="ECO:0007669"/>
    <property type="project" value="TreeGrafter"/>
</dbReference>
<dbReference type="GO" id="GO:0002161">
    <property type="term" value="F:aminoacyl-tRNA deacylase activity"/>
    <property type="evidence" value="ECO:0007669"/>
    <property type="project" value="InterPro"/>
</dbReference>
<dbReference type="GO" id="GO:0005524">
    <property type="term" value="F:ATP binding"/>
    <property type="evidence" value="ECO:0007669"/>
    <property type="project" value="UniProtKB-UniRule"/>
</dbReference>
<dbReference type="GO" id="GO:0004827">
    <property type="term" value="F:proline-tRNA ligase activity"/>
    <property type="evidence" value="ECO:0007669"/>
    <property type="project" value="UniProtKB-UniRule"/>
</dbReference>
<dbReference type="GO" id="GO:0006433">
    <property type="term" value="P:prolyl-tRNA aminoacylation"/>
    <property type="evidence" value="ECO:0007669"/>
    <property type="project" value="UniProtKB-UniRule"/>
</dbReference>
<dbReference type="CDD" id="cd04334">
    <property type="entry name" value="ProRS-INS"/>
    <property type="match status" value="1"/>
</dbReference>
<dbReference type="CDD" id="cd00861">
    <property type="entry name" value="ProRS_anticodon_short"/>
    <property type="match status" value="1"/>
</dbReference>
<dbReference type="CDD" id="cd00779">
    <property type="entry name" value="ProRS_core_prok"/>
    <property type="match status" value="1"/>
</dbReference>
<dbReference type="FunFam" id="3.30.930.10:FF:000042">
    <property type="entry name" value="probable proline--tRNA ligase, mitochondrial"/>
    <property type="match status" value="1"/>
</dbReference>
<dbReference type="FunFam" id="3.30.930.10:FF:000097">
    <property type="entry name" value="Proline--tRNA ligase"/>
    <property type="match status" value="1"/>
</dbReference>
<dbReference type="Gene3D" id="3.40.50.800">
    <property type="entry name" value="Anticodon-binding domain"/>
    <property type="match status" value="1"/>
</dbReference>
<dbReference type="Gene3D" id="3.30.930.10">
    <property type="entry name" value="Bira Bifunctional Protein, Domain 2"/>
    <property type="match status" value="2"/>
</dbReference>
<dbReference type="Gene3D" id="3.90.960.10">
    <property type="entry name" value="YbaK/aminoacyl-tRNA synthetase-associated domain"/>
    <property type="match status" value="1"/>
</dbReference>
<dbReference type="HAMAP" id="MF_01569">
    <property type="entry name" value="Pro_tRNA_synth_type1"/>
    <property type="match status" value="1"/>
</dbReference>
<dbReference type="InterPro" id="IPR002314">
    <property type="entry name" value="aa-tRNA-synt_IIb"/>
</dbReference>
<dbReference type="InterPro" id="IPR006195">
    <property type="entry name" value="aa-tRNA-synth_II"/>
</dbReference>
<dbReference type="InterPro" id="IPR045864">
    <property type="entry name" value="aa-tRNA-synth_II/BPL/LPL"/>
</dbReference>
<dbReference type="InterPro" id="IPR004154">
    <property type="entry name" value="Anticodon-bd"/>
</dbReference>
<dbReference type="InterPro" id="IPR036621">
    <property type="entry name" value="Anticodon-bd_dom_sf"/>
</dbReference>
<dbReference type="InterPro" id="IPR002316">
    <property type="entry name" value="Pro-tRNA-ligase_IIa"/>
</dbReference>
<dbReference type="InterPro" id="IPR004500">
    <property type="entry name" value="Pro-tRNA-synth_IIa_bac-type"/>
</dbReference>
<dbReference type="InterPro" id="IPR023717">
    <property type="entry name" value="Pro-tRNA-Synthase_IIa_type1"/>
</dbReference>
<dbReference type="InterPro" id="IPR050062">
    <property type="entry name" value="Pro-tRNA_synthetase"/>
</dbReference>
<dbReference type="InterPro" id="IPR044140">
    <property type="entry name" value="ProRS_anticodon_short"/>
</dbReference>
<dbReference type="InterPro" id="IPR033730">
    <property type="entry name" value="ProRS_core_prok"/>
</dbReference>
<dbReference type="InterPro" id="IPR036754">
    <property type="entry name" value="YbaK/aa-tRNA-synt-asso_dom_sf"/>
</dbReference>
<dbReference type="InterPro" id="IPR007214">
    <property type="entry name" value="YbaK/aa-tRNA-synth-assoc-dom"/>
</dbReference>
<dbReference type="NCBIfam" id="NF006625">
    <property type="entry name" value="PRK09194.1"/>
    <property type="match status" value="1"/>
</dbReference>
<dbReference type="NCBIfam" id="TIGR00409">
    <property type="entry name" value="proS_fam_II"/>
    <property type="match status" value="1"/>
</dbReference>
<dbReference type="PANTHER" id="PTHR42753">
    <property type="entry name" value="MITOCHONDRIAL RIBOSOME PROTEIN L39/PROLYL-TRNA LIGASE FAMILY MEMBER"/>
    <property type="match status" value="1"/>
</dbReference>
<dbReference type="PANTHER" id="PTHR42753:SF2">
    <property type="entry name" value="PROLINE--TRNA LIGASE"/>
    <property type="match status" value="1"/>
</dbReference>
<dbReference type="Pfam" id="PF03129">
    <property type="entry name" value="HGTP_anticodon"/>
    <property type="match status" value="1"/>
</dbReference>
<dbReference type="Pfam" id="PF00587">
    <property type="entry name" value="tRNA-synt_2b"/>
    <property type="match status" value="1"/>
</dbReference>
<dbReference type="Pfam" id="PF04073">
    <property type="entry name" value="tRNA_edit"/>
    <property type="match status" value="1"/>
</dbReference>
<dbReference type="PIRSF" id="PIRSF001535">
    <property type="entry name" value="ProRS_1"/>
    <property type="match status" value="1"/>
</dbReference>
<dbReference type="PRINTS" id="PR01046">
    <property type="entry name" value="TRNASYNTHPRO"/>
</dbReference>
<dbReference type="SUPFAM" id="SSF52954">
    <property type="entry name" value="Class II aaRS ABD-related"/>
    <property type="match status" value="1"/>
</dbReference>
<dbReference type="SUPFAM" id="SSF55681">
    <property type="entry name" value="Class II aaRS and biotin synthetases"/>
    <property type="match status" value="1"/>
</dbReference>
<dbReference type="SUPFAM" id="SSF55826">
    <property type="entry name" value="YbaK/ProRS associated domain"/>
    <property type="match status" value="1"/>
</dbReference>
<dbReference type="PROSITE" id="PS50862">
    <property type="entry name" value="AA_TRNA_LIGASE_II"/>
    <property type="match status" value="1"/>
</dbReference>
<protein>
    <recommendedName>
        <fullName evidence="1">Proline--tRNA ligase</fullName>
        <ecNumber evidence="1">6.1.1.15</ecNumber>
    </recommendedName>
    <alternativeName>
        <fullName evidence="1">Prolyl-tRNA synthetase</fullName>
        <shortName evidence="1">ProRS</shortName>
    </alternativeName>
</protein>